<keyword id="KW-0027">Amidation</keyword>
<keyword id="KW-0903">Direct protein sequencing</keyword>
<keyword id="KW-0964">Secreted</keyword>
<keyword id="KW-0800">Toxin</keyword>
<organism>
    <name type="scientific">Cupiennius salei</name>
    <name type="common">American wandering spider</name>
    <dbReference type="NCBI Taxonomy" id="6928"/>
    <lineage>
        <taxon>Eukaryota</taxon>
        <taxon>Metazoa</taxon>
        <taxon>Ecdysozoa</taxon>
        <taxon>Arthropoda</taxon>
        <taxon>Chelicerata</taxon>
        <taxon>Arachnida</taxon>
        <taxon>Araneae</taxon>
        <taxon>Araneomorphae</taxon>
        <taxon>Entelegynae</taxon>
        <taxon>Lycosoidea</taxon>
        <taxon>Ctenidae</taxon>
        <taxon>Cupiennius</taxon>
    </lineage>
</organism>
<proteinExistence type="evidence at protein level"/>
<evidence type="ECO:0000269" key="1">
    <source>
    </source>
</evidence>
<evidence type="ECO:0000303" key="2">
    <source>
    </source>
</evidence>
<evidence type="ECO:0000303" key="3">
    <source ref="2"/>
</evidence>
<evidence type="ECO:0000305" key="4"/>
<evidence type="ECO:0000305" key="5">
    <source>
    </source>
</evidence>
<dbReference type="GO" id="GO:0005576">
    <property type="term" value="C:extracellular region"/>
    <property type="evidence" value="ECO:0007669"/>
    <property type="project" value="UniProtKB-SubCell"/>
</dbReference>
<dbReference type="GO" id="GO:0090729">
    <property type="term" value="F:toxin activity"/>
    <property type="evidence" value="ECO:0007669"/>
    <property type="project" value="UniProtKB-KW"/>
</dbReference>
<dbReference type="GO" id="GO:0042742">
    <property type="term" value="P:defense response to bacterium"/>
    <property type="evidence" value="ECO:0007669"/>
    <property type="project" value="InterPro"/>
</dbReference>
<dbReference type="InterPro" id="IPR035164">
    <property type="entry name" value="Cupiennin"/>
</dbReference>
<dbReference type="Pfam" id="PF17563">
    <property type="entry name" value="Cu"/>
    <property type="match status" value="1"/>
</dbReference>
<comment type="subcellular location">
    <subcellularLocation>
        <location evidence="1">Secreted</location>
    </subcellularLocation>
</comment>
<comment type="tissue specificity">
    <text evidence="5">Expressed by the venom gland.</text>
</comment>
<comment type="mass spectrometry"/>
<comment type="similarity">
    <text evidence="4">Belongs to the cationic peptide 04 (cupiennin) family. 08 subfamily.</text>
</comment>
<accession>B3EWV6</accession>
<protein>
    <recommendedName>
        <fullName evidence="3">Cupiennin-4a</fullName>
        <shortName evidence="3">Cu-4a</shortName>
    </recommendedName>
    <alternativeName>
        <fullName evidence="2">Short cationic peptide-4a</fullName>
        <shortName evidence="2">SCP-4a</shortName>
    </alternativeName>
</protein>
<name>TXC4A_CUPSA</name>
<sequence>GFGMLFKFLAKKVAKKLVSHVAQKQLE</sequence>
<feature type="peptide" id="PRO_0000421213" description="Cupiennin-4a" evidence="1">
    <location>
        <begin position="1"/>
        <end position="27"/>
    </location>
</feature>
<feature type="modified residue" description="Glutamic acid 1-amide" evidence="1">
    <location>
        <position position="27"/>
    </location>
</feature>
<reference key="1">
    <citation type="journal article" date="2012" name="FEBS J.">
        <title>Multicomponent venom of the spider Cupiennius salei: a bioanalytical investigation applying different strategies.</title>
        <authorList>
            <person name="Trachsel C."/>
            <person name="Siegemund D."/>
            <person name="Kampfer U."/>
            <person name="Kopp L.S."/>
            <person name="Buhr C."/>
            <person name="Grossmann J."/>
            <person name="Luthi C."/>
            <person name="Cunningham M."/>
            <person name="Nentwig W."/>
            <person name="Kuhn-Nentwig L."/>
            <person name="Schurch S."/>
            <person name="Schaller J."/>
        </authorList>
    </citation>
    <scope>PROTEIN SEQUENCE</scope>
    <scope>MASS SPECTROMETRY</scope>
    <scope>AMIDATION AT GLU-27</scope>
    <source>
        <tissue>Venom</tissue>
    </source>
</reference>
<reference key="2">
    <citation type="unpublished observations" date="2015-06">
        <authorList>
            <person name="Kuhn-Nentwig L."/>
            <person name="Gohel T."/>
        </authorList>
    </citation>
    <scope>NOMENCLATURE</scope>
</reference>